<protein>
    <recommendedName>
        <fullName evidence="1">Glycerol-3-phosphate acyltransferase 4</fullName>
    </recommendedName>
    <alternativeName>
        <fullName evidence="1">Acyl-PO4 G3P acyltransferase 4</fullName>
    </alternativeName>
    <alternativeName>
        <fullName evidence="1">Acyl-phosphate--glycerol-3-phosphate acyltransferase 4</fullName>
    </alternativeName>
    <alternativeName>
        <fullName evidence="1">G3P acyltransferase 4</fullName>
        <shortName evidence="1">GPAT 4</shortName>
        <ecNumber evidence="1">2.3.1.275</ecNumber>
    </alternativeName>
    <alternativeName>
        <fullName evidence="1">Lysophosphatidic acid synthase 4</fullName>
        <shortName evidence="1">LPA synthase 4</shortName>
    </alternativeName>
</protein>
<accession>Q3Z6K1</accession>
<name>PLSY4_DEHM1</name>
<evidence type="ECO:0000255" key="1">
    <source>
        <dbReference type="HAMAP-Rule" id="MF_01043"/>
    </source>
</evidence>
<gene>
    <name evidence="1" type="primary">plsY4</name>
    <name type="ordered locus">DET1445</name>
</gene>
<reference key="1">
    <citation type="journal article" date="2005" name="Science">
        <title>Genome sequence of the PCE-dechlorinating bacterium Dehalococcoides ethenogenes.</title>
        <authorList>
            <person name="Seshadri R."/>
            <person name="Adrian L."/>
            <person name="Fouts D.E."/>
            <person name="Eisen J.A."/>
            <person name="Phillippy A.M."/>
            <person name="Methe B.A."/>
            <person name="Ward N.L."/>
            <person name="Nelson W.C."/>
            <person name="DeBoy R.T."/>
            <person name="Khouri H.M."/>
            <person name="Kolonay J.F."/>
            <person name="Dodson R.J."/>
            <person name="Daugherty S.C."/>
            <person name="Brinkac L.M."/>
            <person name="Sullivan S.A."/>
            <person name="Madupu R."/>
            <person name="Nelson K.E."/>
            <person name="Kang K.H."/>
            <person name="Impraim M."/>
            <person name="Tran K."/>
            <person name="Robinson J.M."/>
            <person name="Forberger H.A."/>
            <person name="Fraser C.M."/>
            <person name="Zinder S.H."/>
            <person name="Heidelberg J.F."/>
        </authorList>
    </citation>
    <scope>NUCLEOTIDE SEQUENCE [LARGE SCALE GENOMIC DNA]</scope>
    <source>
        <strain>ATCC BAA-2266 / KCTC 15142 / 195</strain>
    </source>
</reference>
<keyword id="KW-1003">Cell membrane</keyword>
<keyword id="KW-0444">Lipid biosynthesis</keyword>
<keyword id="KW-0443">Lipid metabolism</keyword>
<keyword id="KW-0472">Membrane</keyword>
<keyword id="KW-0594">Phospholipid biosynthesis</keyword>
<keyword id="KW-1208">Phospholipid metabolism</keyword>
<keyword id="KW-0808">Transferase</keyword>
<keyword id="KW-0812">Transmembrane</keyword>
<keyword id="KW-1133">Transmembrane helix</keyword>
<proteinExistence type="inferred from homology"/>
<dbReference type="EC" id="2.3.1.275" evidence="1"/>
<dbReference type="EMBL" id="CP000027">
    <property type="protein sequence ID" value="AAW39265.1"/>
    <property type="molecule type" value="Genomic_DNA"/>
</dbReference>
<dbReference type="SMR" id="Q3Z6K1"/>
<dbReference type="STRING" id="243164.DET1445"/>
<dbReference type="KEGG" id="det:DET1445"/>
<dbReference type="eggNOG" id="COG0344">
    <property type="taxonomic scope" value="Bacteria"/>
</dbReference>
<dbReference type="HOGENOM" id="CLU_081254_7_2_0"/>
<dbReference type="InParanoid" id="Q3Z6K1"/>
<dbReference type="UniPathway" id="UPA00085"/>
<dbReference type="Proteomes" id="UP000008289">
    <property type="component" value="Chromosome"/>
</dbReference>
<dbReference type="GO" id="GO:0005886">
    <property type="term" value="C:plasma membrane"/>
    <property type="evidence" value="ECO:0007669"/>
    <property type="project" value="UniProtKB-SubCell"/>
</dbReference>
<dbReference type="GO" id="GO:0043772">
    <property type="term" value="F:acyl-phosphate glycerol-3-phosphate acyltransferase activity"/>
    <property type="evidence" value="ECO:0007669"/>
    <property type="project" value="UniProtKB-UniRule"/>
</dbReference>
<dbReference type="GO" id="GO:0008654">
    <property type="term" value="P:phospholipid biosynthetic process"/>
    <property type="evidence" value="ECO:0007669"/>
    <property type="project" value="UniProtKB-UniRule"/>
</dbReference>
<dbReference type="HAMAP" id="MF_01043">
    <property type="entry name" value="PlsY"/>
    <property type="match status" value="1"/>
</dbReference>
<dbReference type="InterPro" id="IPR003811">
    <property type="entry name" value="G3P_acylTferase_PlsY"/>
</dbReference>
<dbReference type="PANTHER" id="PTHR30309:SF0">
    <property type="entry name" value="GLYCEROL-3-PHOSPHATE ACYLTRANSFERASE-RELATED"/>
    <property type="match status" value="1"/>
</dbReference>
<dbReference type="PANTHER" id="PTHR30309">
    <property type="entry name" value="INNER MEMBRANE PROTEIN YGIH"/>
    <property type="match status" value="1"/>
</dbReference>
<dbReference type="Pfam" id="PF02660">
    <property type="entry name" value="G3P_acyltransf"/>
    <property type="match status" value="1"/>
</dbReference>
<dbReference type="SMART" id="SM01207">
    <property type="entry name" value="G3P_acyltransf"/>
    <property type="match status" value="1"/>
</dbReference>
<organism>
    <name type="scientific">Dehalococcoides mccartyi (strain ATCC BAA-2266 / KCTC 15142 / 195)</name>
    <name type="common">Dehalococcoides ethenogenes (strain 195)</name>
    <dbReference type="NCBI Taxonomy" id="243164"/>
    <lineage>
        <taxon>Bacteria</taxon>
        <taxon>Bacillati</taxon>
        <taxon>Chloroflexota</taxon>
        <taxon>Dehalococcoidia</taxon>
        <taxon>Dehalococcoidales</taxon>
        <taxon>Dehalococcoidaceae</taxon>
        <taxon>Dehalococcoides</taxon>
    </lineage>
</organism>
<comment type="function">
    <text evidence="1">Catalyzes the transfer of an acyl group from acyl-phosphate (acyl-PO(4)) to glycerol-3-phosphate (G3P) to form lysophosphatidic acid (LPA). This enzyme utilizes acyl-phosphate as fatty acyl donor, but not acyl-CoA or acyl-ACP.</text>
</comment>
<comment type="catalytic activity">
    <reaction evidence="1">
        <text>an acyl phosphate + sn-glycerol 3-phosphate = a 1-acyl-sn-glycero-3-phosphate + phosphate</text>
        <dbReference type="Rhea" id="RHEA:34075"/>
        <dbReference type="ChEBI" id="CHEBI:43474"/>
        <dbReference type="ChEBI" id="CHEBI:57597"/>
        <dbReference type="ChEBI" id="CHEBI:57970"/>
        <dbReference type="ChEBI" id="CHEBI:59918"/>
        <dbReference type="EC" id="2.3.1.275"/>
    </reaction>
</comment>
<comment type="pathway">
    <text evidence="1">Lipid metabolism; phospholipid metabolism.</text>
</comment>
<comment type="subunit">
    <text evidence="1">Probably interacts with PlsX.</text>
</comment>
<comment type="subcellular location">
    <subcellularLocation>
        <location evidence="1">Cell membrane</location>
        <topology evidence="1">Multi-pass membrane protein</topology>
    </subcellularLocation>
</comment>
<comment type="similarity">
    <text evidence="1">Belongs to the PlsY family.</text>
</comment>
<sequence>MPLLFVLLSYLLGTFPSAYLAGYLSTDRDIRLMGDHNMGAQNAYRCLGRGWGLAVFVFDLAKGSLAITLALAAGLSPGWVMFCGLAAVLGHNWPVWLGFRGGRGEATAIGVMLLIATQPMLIMGGLGLLVLLFTSSVIAASAVMFGLLWLAVILYGLPGGVVAYSIGLPVVVGLTHFIRSRKNRL</sequence>
<feature type="chain" id="PRO_0000188352" description="Glycerol-3-phosphate acyltransferase 4">
    <location>
        <begin position="1"/>
        <end position="185"/>
    </location>
</feature>
<feature type="transmembrane region" description="Helical" evidence="1">
    <location>
        <begin position="1"/>
        <end position="21"/>
    </location>
</feature>
<feature type="transmembrane region" description="Helical" evidence="1">
    <location>
        <begin position="47"/>
        <end position="67"/>
    </location>
</feature>
<feature type="transmembrane region" description="Helical" evidence="1">
    <location>
        <begin position="69"/>
        <end position="89"/>
    </location>
</feature>
<feature type="transmembrane region" description="Helical" evidence="1">
    <location>
        <begin position="113"/>
        <end position="133"/>
    </location>
</feature>
<feature type="transmembrane region" description="Helical" evidence="1">
    <location>
        <begin position="137"/>
        <end position="157"/>
    </location>
</feature>
<feature type="transmembrane region" description="Helical" evidence="1">
    <location>
        <begin position="158"/>
        <end position="178"/>
    </location>
</feature>